<comment type="function">
    <text evidence="1">Reversibly transfers an adenylyl group from ATP to 4'-phosphopantetheine, yielding dephospho-CoA (dPCoA) and pyrophosphate.</text>
</comment>
<comment type="catalytic activity">
    <reaction evidence="1">
        <text>(R)-4'-phosphopantetheine + ATP + H(+) = 3'-dephospho-CoA + diphosphate</text>
        <dbReference type="Rhea" id="RHEA:19801"/>
        <dbReference type="ChEBI" id="CHEBI:15378"/>
        <dbReference type="ChEBI" id="CHEBI:30616"/>
        <dbReference type="ChEBI" id="CHEBI:33019"/>
        <dbReference type="ChEBI" id="CHEBI:57328"/>
        <dbReference type="ChEBI" id="CHEBI:61723"/>
        <dbReference type="EC" id="2.7.7.3"/>
    </reaction>
</comment>
<comment type="cofactor">
    <cofactor evidence="1">
        <name>Mg(2+)</name>
        <dbReference type="ChEBI" id="CHEBI:18420"/>
    </cofactor>
</comment>
<comment type="pathway">
    <text evidence="1">Cofactor biosynthesis; coenzyme A biosynthesis; CoA from (R)-pantothenate: step 4/5.</text>
</comment>
<comment type="subunit">
    <text evidence="1">Homohexamer.</text>
</comment>
<comment type="subcellular location">
    <subcellularLocation>
        <location evidence="1">Cytoplasm</location>
    </subcellularLocation>
</comment>
<comment type="similarity">
    <text evidence="1">Belongs to the bacterial CoaD family.</text>
</comment>
<protein>
    <recommendedName>
        <fullName evidence="1">Phosphopantetheine adenylyltransferase</fullName>
        <ecNumber evidence="1">2.7.7.3</ecNumber>
    </recommendedName>
    <alternativeName>
        <fullName evidence="1">Dephospho-CoA pyrophosphorylase</fullName>
    </alternativeName>
    <alternativeName>
        <fullName evidence="1">Pantetheine-phosphate adenylyltransferase</fullName>
        <shortName evidence="1">PPAT</shortName>
    </alternativeName>
</protein>
<evidence type="ECO:0000255" key="1">
    <source>
        <dbReference type="HAMAP-Rule" id="MF_00151"/>
    </source>
</evidence>
<dbReference type="EC" id="2.7.7.3" evidence="1"/>
<dbReference type="EMBL" id="AE014184">
    <property type="protein sequence ID" value="AAO44662.1"/>
    <property type="molecule type" value="Genomic_DNA"/>
</dbReference>
<dbReference type="RefSeq" id="WP_011096154.1">
    <property type="nucleotide sequence ID" value="NC_004572.3"/>
</dbReference>
<dbReference type="SMR" id="Q83FX9"/>
<dbReference type="STRING" id="203267.TWT_565"/>
<dbReference type="GeneID" id="67387972"/>
<dbReference type="KEGG" id="twh:TWT_565"/>
<dbReference type="eggNOG" id="COG0669">
    <property type="taxonomic scope" value="Bacteria"/>
</dbReference>
<dbReference type="HOGENOM" id="CLU_100149_0_1_11"/>
<dbReference type="OrthoDB" id="9806661at2"/>
<dbReference type="UniPathway" id="UPA00241">
    <property type="reaction ID" value="UER00355"/>
</dbReference>
<dbReference type="Proteomes" id="UP000002200">
    <property type="component" value="Chromosome"/>
</dbReference>
<dbReference type="GO" id="GO:0005737">
    <property type="term" value="C:cytoplasm"/>
    <property type="evidence" value="ECO:0007669"/>
    <property type="project" value="UniProtKB-SubCell"/>
</dbReference>
<dbReference type="GO" id="GO:0005524">
    <property type="term" value="F:ATP binding"/>
    <property type="evidence" value="ECO:0007669"/>
    <property type="project" value="UniProtKB-KW"/>
</dbReference>
<dbReference type="GO" id="GO:0004595">
    <property type="term" value="F:pantetheine-phosphate adenylyltransferase activity"/>
    <property type="evidence" value="ECO:0007669"/>
    <property type="project" value="UniProtKB-UniRule"/>
</dbReference>
<dbReference type="GO" id="GO:0015937">
    <property type="term" value="P:coenzyme A biosynthetic process"/>
    <property type="evidence" value="ECO:0007669"/>
    <property type="project" value="UniProtKB-UniRule"/>
</dbReference>
<dbReference type="Gene3D" id="3.40.50.620">
    <property type="entry name" value="HUPs"/>
    <property type="match status" value="1"/>
</dbReference>
<dbReference type="HAMAP" id="MF_00151">
    <property type="entry name" value="PPAT_bact"/>
    <property type="match status" value="1"/>
</dbReference>
<dbReference type="InterPro" id="IPR004821">
    <property type="entry name" value="Cyt_trans-like"/>
</dbReference>
<dbReference type="InterPro" id="IPR001980">
    <property type="entry name" value="PPAT"/>
</dbReference>
<dbReference type="InterPro" id="IPR014729">
    <property type="entry name" value="Rossmann-like_a/b/a_fold"/>
</dbReference>
<dbReference type="NCBIfam" id="TIGR01510">
    <property type="entry name" value="coaD_prev_kdtB"/>
    <property type="match status" value="1"/>
</dbReference>
<dbReference type="NCBIfam" id="TIGR00125">
    <property type="entry name" value="cyt_tran_rel"/>
    <property type="match status" value="1"/>
</dbReference>
<dbReference type="PANTHER" id="PTHR21342">
    <property type="entry name" value="PHOSPHOPANTETHEINE ADENYLYLTRANSFERASE"/>
    <property type="match status" value="1"/>
</dbReference>
<dbReference type="PANTHER" id="PTHR21342:SF1">
    <property type="entry name" value="PHOSPHOPANTETHEINE ADENYLYLTRANSFERASE"/>
    <property type="match status" value="1"/>
</dbReference>
<dbReference type="Pfam" id="PF01467">
    <property type="entry name" value="CTP_transf_like"/>
    <property type="match status" value="1"/>
</dbReference>
<dbReference type="PRINTS" id="PR01020">
    <property type="entry name" value="LPSBIOSNTHSS"/>
</dbReference>
<dbReference type="SUPFAM" id="SSF52374">
    <property type="entry name" value="Nucleotidylyl transferase"/>
    <property type="match status" value="1"/>
</dbReference>
<keyword id="KW-0067">ATP-binding</keyword>
<keyword id="KW-0173">Coenzyme A biosynthesis</keyword>
<keyword id="KW-0963">Cytoplasm</keyword>
<keyword id="KW-0460">Magnesium</keyword>
<keyword id="KW-0547">Nucleotide-binding</keyword>
<keyword id="KW-0548">Nucleotidyltransferase</keyword>
<keyword id="KW-1185">Reference proteome</keyword>
<keyword id="KW-0808">Transferase</keyword>
<name>COAD_TROWT</name>
<proteinExistence type="inferred from homology"/>
<organism>
    <name type="scientific">Tropheryma whipplei (strain Twist)</name>
    <name type="common">Whipple's bacillus</name>
    <dbReference type="NCBI Taxonomy" id="203267"/>
    <lineage>
        <taxon>Bacteria</taxon>
        <taxon>Bacillati</taxon>
        <taxon>Actinomycetota</taxon>
        <taxon>Actinomycetes</taxon>
        <taxon>Micrococcales</taxon>
        <taxon>Tropherymataceae</taxon>
        <taxon>Tropheryma</taxon>
    </lineage>
</organism>
<gene>
    <name evidence="1" type="primary">coaD</name>
    <name type="ordered locus">TWT_565</name>
</gene>
<accession>Q83FX9</accession>
<feature type="chain" id="PRO_0000156302" description="Phosphopantetheine adenylyltransferase">
    <location>
        <begin position="1"/>
        <end position="176"/>
    </location>
</feature>
<feature type="binding site" evidence="1">
    <location>
        <begin position="11"/>
        <end position="12"/>
    </location>
    <ligand>
        <name>ATP</name>
        <dbReference type="ChEBI" id="CHEBI:30616"/>
    </ligand>
</feature>
<feature type="binding site" evidence="1">
    <location>
        <position position="11"/>
    </location>
    <ligand>
        <name>substrate</name>
    </ligand>
</feature>
<feature type="binding site" evidence="1">
    <location>
        <position position="19"/>
    </location>
    <ligand>
        <name>ATP</name>
        <dbReference type="ChEBI" id="CHEBI:30616"/>
    </ligand>
</feature>
<feature type="binding site" evidence="1">
    <location>
        <position position="43"/>
    </location>
    <ligand>
        <name>substrate</name>
    </ligand>
</feature>
<feature type="binding site" evidence="1">
    <location>
        <position position="93"/>
    </location>
    <ligand>
        <name>substrate</name>
    </ligand>
</feature>
<feature type="binding site" evidence="1">
    <location>
        <position position="107"/>
    </location>
    <ligand>
        <name>substrate</name>
    </ligand>
</feature>
<feature type="binding site" evidence="1">
    <location>
        <position position="117"/>
    </location>
    <ligand>
        <name>ATP</name>
        <dbReference type="ChEBI" id="CHEBI:30616"/>
    </ligand>
</feature>
<feature type="binding site" evidence="1">
    <location>
        <begin position="141"/>
        <end position="147"/>
    </location>
    <ligand>
        <name>ATP</name>
        <dbReference type="ChEBI" id="CHEBI:30616"/>
    </ligand>
</feature>
<feature type="site" description="Transition state stabilizer" evidence="1">
    <location>
        <position position="19"/>
    </location>
</feature>
<reference key="1">
    <citation type="journal article" date="2003" name="Genome Res.">
        <title>Tropheryma whipplei twist: a human pathogenic Actinobacteria with a reduced genome.</title>
        <authorList>
            <person name="Raoult D."/>
            <person name="Ogata H."/>
            <person name="Audic S."/>
            <person name="Robert C."/>
            <person name="Suhre K."/>
            <person name="Drancourt M."/>
            <person name="Claverie J.-M."/>
        </authorList>
    </citation>
    <scope>NUCLEOTIDE SEQUENCE [LARGE SCALE GENOMIC DNA]</scope>
    <source>
        <strain>Twist</strain>
    </source>
</reference>
<sequence length="176" mass="19254">MSNRIAVVPGTFDPVTRGHMDILTRTSRIFNTLYVLVANNPDKTPLLPMHDRVDLVGQALEEYGFPRSEPKCDSESDRNGPIVKIHRFEKGLLVDCCKQLGATVIVRGLISADAHREASMAYANRNMSGIETVFILPDPPLSVVSSSMVRQLIALGGDISPYVPACVTRFFGTHSG</sequence>